<keyword id="KW-0256">Endoplasmic reticulum</keyword>
<keyword id="KW-0325">Glycoprotein</keyword>
<keyword id="KW-0472">Membrane</keyword>
<keyword id="KW-0496">Mitochondrion</keyword>
<keyword id="KW-1185">Reference proteome</keyword>
<keyword id="KW-0812">Transmembrane</keyword>
<keyword id="KW-1133">Transmembrane helix</keyword>
<protein>
    <recommendedName>
        <fullName evidence="13">Membrane-anchored lipid-binding protein LAM1</fullName>
    </recommendedName>
    <alternativeName>
        <fullName evidence="13">Lipid transfer protein anchored at membrane contact sites 1</fullName>
    </alternativeName>
    <alternativeName>
        <fullName evidence="12">Yeast suicide protein 1</fullName>
    </alternativeName>
</protein>
<proteinExistence type="evidence at protein level"/>
<dbReference type="EMBL" id="U10397">
    <property type="protein sequence ID" value="AAB68977.1"/>
    <property type="molecule type" value="Genomic_DNA"/>
</dbReference>
<dbReference type="EMBL" id="BK006934">
    <property type="protein sequence ID" value="DAA06848.1"/>
    <property type="molecule type" value="Genomic_DNA"/>
</dbReference>
<dbReference type="PIR" id="S46754">
    <property type="entry name" value="S46754"/>
</dbReference>
<dbReference type="RefSeq" id="NP_012025.1">
    <property type="nucleotide sequence ID" value="NM_001179286.1"/>
</dbReference>
<dbReference type="BioGRID" id="36589">
    <property type="interactions" value="68"/>
</dbReference>
<dbReference type="FunCoup" id="P38851">
    <property type="interactions" value="76"/>
</dbReference>
<dbReference type="IntAct" id="P38851">
    <property type="interactions" value="1"/>
</dbReference>
<dbReference type="MINT" id="P38851"/>
<dbReference type="STRING" id="4932.YHR155W"/>
<dbReference type="TCDB" id="9.B.198.1.1">
    <property type="family name" value="the membrane-anchored lipid-binding protein (lam) family"/>
</dbReference>
<dbReference type="GlyCosmos" id="P38851">
    <property type="glycosylation" value="1 site, No reported glycans"/>
</dbReference>
<dbReference type="GlyGen" id="P38851">
    <property type="glycosylation" value="1 site"/>
</dbReference>
<dbReference type="iPTMnet" id="P38851"/>
<dbReference type="PaxDb" id="4932-YHR155W"/>
<dbReference type="PeptideAtlas" id="P38851"/>
<dbReference type="TopDownProteomics" id="P38851"/>
<dbReference type="EnsemblFungi" id="YHR155W_mRNA">
    <property type="protein sequence ID" value="YHR155W"/>
    <property type="gene ID" value="YHR155W"/>
</dbReference>
<dbReference type="GeneID" id="856560"/>
<dbReference type="KEGG" id="sce:YHR155W"/>
<dbReference type="AGR" id="SGD:S000001198"/>
<dbReference type="SGD" id="S000001198">
    <property type="gene designation" value="LAM1"/>
</dbReference>
<dbReference type="VEuPathDB" id="FungiDB:YHR155W"/>
<dbReference type="eggNOG" id="ENOG502QU87">
    <property type="taxonomic scope" value="Eukaryota"/>
</dbReference>
<dbReference type="GeneTree" id="ENSGT00940000154453"/>
<dbReference type="HOGENOM" id="CLU_001720_0_0_1"/>
<dbReference type="InParanoid" id="P38851"/>
<dbReference type="OMA" id="WSIAIAY"/>
<dbReference type="OrthoDB" id="10070851at2759"/>
<dbReference type="BioCyc" id="YEAST:G3O-31190-MONOMER"/>
<dbReference type="BioGRID-ORCS" id="856560">
    <property type="hits" value="0 hits in 10 CRISPR screens"/>
</dbReference>
<dbReference type="PRO" id="PR:P38851"/>
<dbReference type="Proteomes" id="UP000002311">
    <property type="component" value="Chromosome VIII"/>
</dbReference>
<dbReference type="RNAct" id="P38851">
    <property type="molecule type" value="protein"/>
</dbReference>
<dbReference type="GO" id="GO:0032541">
    <property type="term" value="C:cortical endoplasmic reticulum"/>
    <property type="evidence" value="ECO:0000314"/>
    <property type="project" value="SGD"/>
</dbReference>
<dbReference type="GO" id="GO:0005829">
    <property type="term" value="C:cytosol"/>
    <property type="evidence" value="ECO:0007005"/>
    <property type="project" value="SGD"/>
</dbReference>
<dbReference type="GO" id="GO:0005783">
    <property type="term" value="C:endoplasmic reticulum"/>
    <property type="evidence" value="ECO:0000318"/>
    <property type="project" value="GO_Central"/>
</dbReference>
<dbReference type="GO" id="GO:0005789">
    <property type="term" value="C:endoplasmic reticulum membrane"/>
    <property type="evidence" value="ECO:0007669"/>
    <property type="project" value="UniProtKB-SubCell"/>
</dbReference>
<dbReference type="GO" id="GO:0031966">
    <property type="term" value="C:mitochondrial membrane"/>
    <property type="evidence" value="ECO:0007669"/>
    <property type="project" value="UniProtKB-SubCell"/>
</dbReference>
<dbReference type="GO" id="GO:0005739">
    <property type="term" value="C:mitochondrion"/>
    <property type="evidence" value="ECO:0000314"/>
    <property type="project" value="SGD"/>
</dbReference>
<dbReference type="GO" id="GO:0005886">
    <property type="term" value="C:plasma membrane"/>
    <property type="evidence" value="ECO:0000318"/>
    <property type="project" value="GO_Central"/>
</dbReference>
<dbReference type="GO" id="GO:0032366">
    <property type="term" value="P:intracellular sterol transport"/>
    <property type="evidence" value="ECO:0000315"/>
    <property type="project" value="SGD"/>
</dbReference>
<dbReference type="CDD" id="cd07609">
    <property type="entry name" value="BAR_SIP3_fungi"/>
    <property type="match status" value="1"/>
</dbReference>
<dbReference type="CDD" id="cd13280">
    <property type="entry name" value="PH_SIP3"/>
    <property type="match status" value="1"/>
</dbReference>
<dbReference type="FunFam" id="1.20.1270.60:FF:000105">
    <property type="entry name" value="Ysp1p"/>
    <property type="match status" value="1"/>
</dbReference>
<dbReference type="FunFam" id="2.30.29.30:FF:000426">
    <property type="entry name" value="Ysp1p"/>
    <property type="match status" value="1"/>
</dbReference>
<dbReference type="Gene3D" id="1.20.1270.60">
    <property type="entry name" value="Arfaptin homology (AH) domain/BAR domain"/>
    <property type="match status" value="1"/>
</dbReference>
<dbReference type="Gene3D" id="2.30.29.30">
    <property type="entry name" value="Pleckstrin-homology domain (PH domain)/Phosphotyrosine-binding domain (PTB)"/>
    <property type="match status" value="1"/>
</dbReference>
<dbReference type="InterPro" id="IPR027267">
    <property type="entry name" value="AH/BAR_dom_sf"/>
</dbReference>
<dbReference type="InterPro" id="IPR011993">
    <property type="entry name" value="PH-like_dom_sf"/>
</dbReference>
<dbReference type="InterPro" id="IPR001849">
    <property type="entry name" value="PH_domain"/>
</dbReference>
<dbReference type="InterPro" id="IPR039463">
    <property type="entry name" value="Sip3/Lam1_BAR"/>
</dbReference>
<dbReference type="InterPro" id="IPR042067">
    <property type="entry name" value="Sip3_PH"/>
</dbReference>
<dbReference type="InterPro" id="IPR031968">
    <property type="entry name" value="VASt"/>
</dbReference>
<dbReference type="PANTHER" id="PTHR14248">
    <property type="entry name" value="CYCLIN Y, ISOFORM A"/>
    <property type="match status" value="1"/>
</dbReference>
<dbReference type="Pfam" id="PF00169">
    <property type="entry name" value="PH"/>
    <property type="match status" value="1"/>
</dbReference>
<dbReference type="SMART" id="SM00233">
    <property type="entry name" value="PH"/>
    <property type="match status" value="1"/>
</dbReference>
<dbReference type="SUPFAM" id="SSF103657">
    <property type="entry name" value="BAR/IMD domain-like"/>
    <property type="match status" value="1"/>
</dbReference>
<dbReference type="SUPFAM" id="SSF50729">
    <property type="entry name" value="PH domain-like"/>
    <property type="match status" value="1"/>
</dbReference>
<dbReference type="PROSITE" id="PS50003">
    <property type="entry name" value="PH_DOMAIN"/>
    <property type="match status" value="1"/>
</dbReference>
<dbReference type="PROSITE" id="PS51778">
    <property type="entry name" value="VAST"/>
    <property type="match status" value="1"/>
</dbReference>
<accession>P38851</accession>
<accession>D3DLA4</accession>
<comment type="function">
    <text evidence="9 10 11">Involved in mitochondrial fragmentation during programmed cell death in response to high levels of alpha-factor mating pheromone or the drug amiodarone (PubMed:15657396, PubMed:18800175). May be involved in sterol transfer between intracellular membranes (PubMed:26001273).</text>
</comment>
<comment type="subcellular location">
    <subcellularLocation>
        <location evidence="7 9">Mitochondrion membrane</location>
        <topology evidence="3">Single-pass membrane protein</topology>
    </subcellularLocation>
    <subcellularLocation>
        <location evidence="11">Endoplasmic reticulum membrane</location>
        <topology evidence="3">Single-pass membrane protein</topology>
    </subcellularLocation>
    <text evidence="11">Localizes to puncta in the cell periphery representing cortical endoplasmic reticulum (cER)-plasma membrane (PM) membrane contact sites.</text>
</comment>
<comment type="domain">
    <text evidence="2">The VASt domain bind sterols.</text>
</comment>
<comment type="miscellaneous">
    <text evidence="8">Present with 1170 molecules/cell in log phase SD medium.</text>
</comment>
<comment type="similarity">
    <text evidence="14">Belongs to the SIP3 family.</text>
</comment>
<gene>
    <name evidence="13" type="primary">LAM1</name>
    <name evidence="12" type="synonym">YSP1</name>
    <name evidence="16" type="ordered locus">YHR155W</name>
</gene>
<reference key="1">
    <citation type="journal article" date="1994" name="Science">
        <title>Complete nucleotide sequence of Saccharomyces cerevisiae chromosome VIII.</title>
        <authorList>
            <person name="Johnston M."/>
            <person name="Andrews S."/>
            <person name="Brinkman R."/>
            <person name="Cooper J."/>
            <person name="Ding H."/>
            <person name="Dover J."/>
            <person name="Du Z."/>
            <person name="Favello A."/>
            <person name="Fulton L."/>
            <person name="Gattung S."/>
            <person name="Geisel C."/>
            <person name="Kirsten J."/>
            <person name="Kucaba T."/>
            <person name="Hillier L.W."/>
            <person name="Jier M."/>
            <person name="Johnston L."/>
            <person name="Langston Y."/>
            <person name="Latreille P."/>
            <person name="Louis E.J."/>
            <person name="Macri C."/>
            <person name="Mardis E."/>
            <person name="Menezes S."/>
            <person name="Mouser L."/>
            <person name="Nhan M."/>
            <person name="Rifkin L."/>
            <person name="Riles L."/>
            <person name="St Peter H."/>
            <person name="Trevaskis E."/>
            <person name="Vaughan K."/>
            <person name="Vignati D."/>
            <person name="Wilcox L."/>
            <person name="Wohldman P."/>
            <person name="Waterston R."/>
            <person name="Wilson R."/>
            <person name="Vaudin M."/>
        </authorList>
    </citation>
    <scope>NUCLEOTIDE SEQUENCE [LARGE SCALE GENOMIC DNA]</scope>
    <source>
        <strain>ATCC 204508 / S288c</strain>
    </source>
</reference>
<reference key="2">
    <citation type="journal article" date="2014" name="G3 (Bethesda)">
        <title>The reference genome sequence of Saccharomyces cerevisiae: Then and now.</title>
        <authorList>
            <person name="Engel S.R."/>
            <person name="Dietrich F.S."/>
            <person name="Fisk D.G."/>
            <person name="Binkley G."/>
            <person name="Balakrishnan R."/>
            <person name="Costanzo M.C."/>
            <person name="Dwight S.S."/>
            <person name="Hitz B.C."/>
            <person name="Karra K."/>
            <person name="Nash R.S."/>
            <person name="Weng S."/>
            <person name="Wong E.D."/>
            <person name="Lloyd P."/>
            <person name="Skrzypek M.S."/>
            <person name="Miyasato S.R."/>
            <person name="Simison M."/>
            <person name="Cherry J.M."/>
        </authorList>
    </citation>
    <scope>GENOME REANNOTATION</scope>
    <source>
        <strain>ATCC 204508 / S288c</strain>
    </source>
</reference>
<reference key="3">
    <citation type="journal article" date="2003" name="Nature">
        <title>Global analysis of protein localization in budding yeast.</title>
        <authorList>
            <person name="Huh W.-K."/>
            <person name="Falvo J.V."/>
            <person name="Gerke L.C."/>
            <person name="Carroll A.S."/>
            <person name="Howson R.W."/>
            <person name="Weissman J.S."/>
            <person name="O'Shea E.K."/>
        </authorList>
    </citation>
    <scope>SUBCELLULAR LOCATION [LARGE SCALE ANALYSIS]</scope>
</reference>
<reference key="4">
    <citation type="journal article" date="2003" name="Nature">
        <title>Global analysis of protein expression in yeast.</title>
        <authorList>
            <person name="Ghaemmaghami S."/>
            <person name="Huh W.-K."/>
            <person name="Bower K."/>
            <person name="Howson R.W."/>
            <person name="Belle A."/>
            <person name="Dephoure N."/>
            <person name="O'Shea E.K."/>
            <person name="Weissman J.S."/>
        </authorList>
    </citation>
    <scope>LEVEL OF PROTEIN EXPRESSION [LARGE SCALE ANALYSIS]</scope>
</reference>
<reference key="5">
    <citation type="journal article" date="2004" name="Mol. Cell">
        <title>Genome-wide analysis of membrane targeting by S.cerevisiae pleckstrin homology domains.</title>
        <authorList>
            <person name="Yu J.W."/>
            <person name="Mendrola J.M."/>
            <person name="Audhya A."/>
            <person name="Singh S."/>
            <person name="Keleti D."/>
            <person name="DeWald D.B."/>
            <person name="Murray D."/>
            <person name="Emr S.D."/>
            <person name="Lemmon M.A."/>
        </authorList>
    </citation>
    <scope>DOMAIN</scope>
</reference>
<reference key="6">
    <citation type="journal article" date="2005" name="J. Cell Biol.">
        <title>Role of mitochondria in the pheromone- and amiodarone-induced programmed death of yeast.</title>
        <authorList>
            <person name="Pozniakovsky A.I."/>
            <person name="Knorre D.A."/>
            <person name="Markova O.V."/>
            <person name="Hyman A.A."/>
            <person name="Skulachev V.P."/>
            <person name="Severin F.F."/>
        </authorList>
    </citation>
    <scope>FUNCTION</scope>
    <scope>SUBCELLULAR LOCATION</scope>
</reference>
<reference key="7">
    <citation type="journal article" date="2008" name="Acta Biochim. Pol.">
        <title>Pdr12p-dependent and -independent fluorescein extrusion from baker's yeast cells.</title>
        <authorList>
            <person name="Lushchak V."/>
            <person name="Abrat O."/>
            <person name="Miedzobrodzki J."/>
            <person name="Semchyshyn H."/>
        </authorList>
    </citation>
    <scope>FUNCTION</scope>
</reference>
<reference key="8">
    <citation type="journal article" date="2015" name="Elife">
        <title>A new family of StART domain proteins at membrane contact sites has a role in ER-PM sterol transport.</title>
        <authorList>
            <person name="Gatta A.T."/>
            <person name="Wong L.H."/>
            <person name="Sere Y.Y."/>
            <person name="Calderon-Norena D.M."/>
            <person name="Cockcroft S."/>
            <person name="Menon A.K."/>
            <person name="Levine T.P."/>
        </authorList>
    </citation>
    <scope>FUNCTION</scope>
    <scope>SUBCELLULAR LOCATION</scope>
</reference>
<organism>
    <name type="scientific">Saccharomyces cerevisiae (strain ATCC 204508 / S288c)</name>
    <name type="common">Baker's yeast</name>
    <dbReference type="NCBI Taxonomy" id="559292"/>
    <lineage>
        <taxon>Eukaryota</taxon>
        <taxon>Fungi</taxon>
        <taxon>Dikarya</taxon>
        <taxon>Ascomycota</taxon>
        <taxon>Saccharomycotina</taxon>
        <taxon>Saccharomycetes</taxon>
        <taxon>Saccharomycetales</taxon>
        <taxon>Saccharomycetaceae</taxon>
        <taxon>Saccharomyces</taxon>
    </lineage>
</organism>
<feature type="chain" id="PRO_0000202927" description="Membrane-anchored lipid-binding protein LAM1">
    <location>
        <begin position="1"/>
        <end position="1228"/>
    </location>
</feature>
<feature type="topological domain" description="Cytoplasmic" evidence="15">
    <location>
        <begin position="1"/>
        <end position="1062"/>
    </location>
</feature>
<feature type="transmembrane region" description="Helical" evidence="3">
    <location>
        <begin position="1063"/>
        <end position="1083"/>
    </location>
</feature>
<feature type="topological domain" description="Lumenal" evidence="1">
    <location>
        <begin position="1084"/>
        <end position="1228"/>
    </location>
</feature>
<feature type="domain" description="PH" evidence="4">
    <location>
        <begin position="308"/>
        <end position="421"/>
    </location>
</feature>
<feature type="domain" description="VASt" evidence="6">
    <location>
        <begin position="773"/>
        <end position="978"/>
    </location>
</feature>
<feature type="glycosylation site" description="N-linked (GlcNAc...) asparagine" evidence="5">
    <location>
        <position position="1205"/>
    </location>
</feature>
<name>LAM1_YEAST</name>
<evidence type="ECO:0000250" key="1">
    <source>
        <dbReference type="UniProtKB" id="P38717"/>
    </source>
</evidence>
<evidence type="ECO:0000250" key="2">
    <source>
        <dbReference type="UniProtKB" id="P38800"/>
    </source>
</evidence>
<evidence type="ECO:0000255" key="3"/>
<evidence type="ECO:0000255" key="4">
    <source>
        <dbReference type="PROSITE-ProRule" id="PRU00145"/>
    </source>
</evidence>
<evidence type="ECO:0000255" key="5">
    <source>
        <dbReference type="PROSITE-ProRule" id="PRU00498"/>
    </source>
</evidence>
<evidence type="ECO:0000255" key="6">
    <source>
        <dbReference type="PROSITE-ProRule" id="PRU01114"/>
    </source>
</evidence>
<evidence type="ECO:0000269" key="7">
    <source>
    </source>
</evidence>
<evidence type="ECO:0000269" key="8">
    <source>
    </source>
</evidence>
<evidence type="ECO:0000269" key="9">
    <source>
    </source>
</evidence>
<evidence type="ECO:0000269" key="10">
    <source>
    </source>
</evidence>
<evidence type="ECO:0000269" key="11">
    <source>
    </source>
</evidence>
<evidence type="ECO:0000303" key="12">
    <source>
    </source>
</evidence>
<evidence type="ECO:0000303" key="13">
    <source>
    </source>
</evidence>
<evidence type="ECO:0000305" key="14"/>
<evidence type="ECO:0000305" key="15">
    <source>
    </source>
</evidence>
<evidence type="ECO:0000312" key="16">
    <source>
        <dbReference type="SGD" id="S000001198"/>
    </source>
</evidence>
<sequence length="1228" mass="143584">MHEHKAELRLITVALNEASTDSPSFRASVNYFHTRMESLSSWMHSTVDYVENTYKPSFQDFQRIKETLFSQLLPSPILLSNGFVSNQPYTPLLVRDFTRDVSDLSNTVMKIILGDENSQYTAALSALSSDAINPYFNKRKTFEYYQRKYDSFLTDFLAATNDGNTLIPQNLQNETFKLVDIKHKYIEASLDLTEAISLMKVNLDKFLIETIDIVRKNNVITTKDTKDVIDITPELTETLKDWTDWIESNLQTLQALSSKLSEAKYAILKLSLARMKPSRLIQDYDLKSIQNLKFNLPKSISNGNNSEEKGLSGWLYMKTTVGHDPKRVVWVRRWCFLQNNVFGVFSLSPSKTYVEETDKFGILWITVEYLPKEPRNFCFKLRIQNPNCKTEEENTYIDIILQAESIDELKSWINTLTSHKRIALSIKEENDPRYQLARKKIEPQFFEFASSSSTSTDKLLTSFSSKTLTLVEELKKNYMSEDDIYSIIDNKAYHLRVISTPIATQLTHLALFSTFLSVSNYYPCATQANTWGTANWNDLSYLVNPLKGSSVHKPATVSNSSRFSVSYPDYYPYSLKVDDIQFRSIFFSVNHDFLQVPKELVLLRYSSVWCPNNKQKFASMAFVTLNHIYVYLNISGFSYLRRIDLLDIDSIEYDKSPKHVSSRMLHMQRGDGLRFNMSVFFTDRRAVASKLQFLIENKAMHIPKGEKEVLEIFQELDEEIENEKKIIKDNLSESEHYSKDYDYLLKSTYDHHFENTNETPMELMSRKLRLEREAWCYFQDNFKVGSKTLFHVLFGDKSQVFPSSLFLCKKGSNLNNNSYWERIRRAKEDASCQFELCRKLQFQLNRTSNFIKDLLWLKDDNDNFKLVLQQRVTKIKQGYYFEVEEGPIIVKFPLCHPLLLRVRFIIAECITSQGESLKKCDLAILYDFNYVESIDKLNTKVEKLWLFERIHLNWALRYCKLEHSEINRKTREYLKKFNDREKMSDVIKLCGFLGVLPKERIENDEKAGDFMQPVYINYDFLSLSKIFTKLTVFYLSSVIIKTMKVLLAMVMVIFKCFSKVNKTLYYCLLISAVTNLFFVGKSIHSYFSVKSAETLFQNYANGDQRGLQIMHRSLTVPDLNLLTRKMMDNDQENPVFKRFDEDKNAYQYKGTRQEIAIKRNQVLTELKILQNTEKELVQGSYRKFIITERDKCITTQNEIFDLWINDTKLQDYCMACFAEYNRLSAIPV</sequence>